<reference key="1">
    <citation type="journal article" date="1995" name="Oncogene">
        <title>Ligands for the receptor tyrosine kinases hek and elk: isolation of cDNAs encoding a family of proteins.</title>
        <authorList>
            <person name="Kozlosky C.J."/>
            <person name="Maraskovsky E."/>
            <person name="McGrew J.T."/>
            <person name="Vanden Bos T."/>
            <person name="Teepe M."/>
            <person name="Lyman S.D."/>
            <person name="Srinivasan S."/>
            <person name="Fletcher F.A."/>
            <person name="Gayle R.B. III"/>
            <person name="Cerretti D.P."/>
            <person name="Beckmann M.P."/>
        </authorList>
    </citation>
    <scope>NUCLEOTIDE SEQUENCE [MRNA] (ISOFORM 1)</scope>
</reference>
<reference key="2">
    <citation type="journal article" date="1994" name="Science">
        <title>Ligands for EPH-related receptor tyrosine kinases that require membrane attachment or clustering for activity.</title>
        <authorList>
            <person name="Davis S."/>
            <person name="Gale N.W."/>
            <person name="Aldrich T.H."/>
            <person name="Maisonpierre P.C."/>
            <person name="Lhotak V."/>
            <person name="Pawson T."/>
            <person name="Goldfarb M."/>
            <person name="Yancopoulos G.D."/>
        </authorList>
    </citation>
    <scope>NUCLEOTIDE SEQUENCE [MRNA] (ISOFORM 1)</scope>
</reference>
<reference key="3">
    <citation type="journal article" date="2004" name="Nat. Genet.">
        <title>Complete sequencing and characterization of 21,243 full-length human cDNAs.</title>
        <authorList>
            <person name="Ota T."/>
            <person name="Suzuki Y."/>
            <person name="Nishikawa T."/>
            <person name="Otsuki T."/>
            <person name="Sugiyama T."/>
            <person name="Irie R."/>
            <person name="Wakamatsu A."/>
            <person name="Hayashi K."/>
            <person name="Sato H."/>
            <person name="Nagai K."/>
            <person name="Kimura K."/>
            <person name="Makita H."/>
            <person name="Sekine M."/>
            <person name="Obayashi M."/>
            <person name="Nishi T."/>
            <person name="Shibahara T."/>
            <person name="Tanaka T."/>
            <person name="Ishii S."/>
            <person name="Yamamoto J."/>
            <person name="Saito K."/>
            <person name="Kawai Y."/>
            <person name="Isono Y."/>
            <person name="Nakamura Y."/>
            <person name="Nagahari K."/>
            <person name="Murakami K."/>
            <person name="Yasuda T."/>
            <person name="Iwayanagi T."/>
            <person name="Wagatsuma M."/>
            <person name="Shiratori A."/>
            <person name="Sudo H."/>
            <person name="Hosoiri T."/>
            <person name="Kaku Y."/>
            <person name="Kodaira H."/>
            <person name="Kondo H."/>
            <person name="Sugawara M."/>
            <person name="Takahashi M."/>
            <person name="Kanda K."/>
            <person name="Yokoi T."/>
            <person name="Furuya T."/>
            <person name="Kikkawa E."/>
            <person name="Omura Y."/>
            <person name="Abe K."/>
            <person name="Kamihara K."/>
            <person name="Katsuta N."/>
            <person name="Sato K."/>
            <person name="Tanikawa M."/>
            <person name="Yamazaki M."/>
            <person name="Ninomiya K."/>
            <person name="Ishibashi T."/>
            <person name="Yamashita H."/>
            <person name="Murakawa K."/>
            <person name="Fujimori K."/>
            <person name="Tanai H."/>
            <person name="Kimata M."/>
            <person name="Watanabe M."/>
            <person name="Hiraoka S."/>
            <person name="Chiba Y."/>
            <person name="Ishida S."/>
            <person name="Ono Y."/>
            <person name="Takiguchi S."/>
            <person name="Watanabe S."/>
            <person name="Yosida M."/>
            <person name="Hotuta T."/>
            <person name="Kusano J."/>
            <person name="Kanehori K."/>
            <person name="Takahashi-Fujii A."/>
            <person name="Hara H."/>
            <person name="Tanase T.-O."/>
            <person name="Nomura Y."/>
            <person name="Togiya S."/>
            <person name="Komai F."/>
            <person name="Hara R."/>
            <person name="Takeuchi K."/>
            <person name="Arita M."/>
            <person name="Imose N."/>
            <person name="Musashino K."/>
            <person name="Yuuki H."/>
            <person name="Oshima A."/>
            <person name="Sasaki N."/>
            <person name="Aotsuka S."/>
            <person name="Yoshikawa Y."/>
            <person name="Matsunawa H."/>
            <person name="Ichihara T."/>
            <person name="Shiohata N."/>
            <person name="Sano S."/>
            <person name="Moriya S."/>
            <person name="Momiyama H."/>
            <person name="Satoh N."/>
            <person name="Takami S."/>
            <person name="Terashima Y."/>
            <person name="Suzuki O."/>
            <person name="Nakagawa S."/>
            <person name="Senoh A."/>
            <person name="Mizoguchi H."/>
            <person name="Goto Y."/>
            <person name="Shimizu F."/>
            <person name="Wakebe H."/>
            <person name="Hishigaki H."/>
            <person name="Watanabe T."/>
            <person name="Sugiyama A."/>
            <person name="Takemoto M."/>
            <person name="Kawakami B."/>
            <person name="Yamazaki M."/>
            <person name="Watanabe K."/>
            <person name="Kumagai A."/>
            <person name="Itakura S."/>
            <person name="Fukuzumi Y."/>
            <person name="Fujimori Y."/>
            <person name="Komiyama M."/>
            <person name="Tashiro H."/>
            <person name="Tanigami A."/>
            <person name="Fujiwara T."/>
            <person name="Ono T."/>
            <person name="Yamada K."/>
            <person name="Fujii Y."/>
            <person name="Ozaki K."/>
            <person name="Hirao M."/>
            <person name="Ohmori Y."/>
            <person name="Kawabata A."/>
            <person name="Hikiji T."/>
            <person name="Kobatake N."/>
            <person name="Inagaki H."/>
            <person name="Ikema Y."/>
            <person name="Okamoto S."/>
            <person name="Okitani R."/>
            <person name="Kawakami T."/>
            <person name="Noguchi S."/>
            <person name="Itoh T."/>
            <person name="Shigeta K."/>
            <person name="Senba T."/>
            <person name="Matsumura K."/>
            <person name="Nakajima Y."/>
            <person name="Mizuno T."/>
            <person name="Morinaga M."/>
            <person name="Sasaki M."/>
            <person name="Togashi T."/>
            <person name="Oyama M."/>
            <person name="Hata H."/>
            <person name="Watanabe M."/>
            <person name="Komatsu T."/>
            <person name="Mizushima-Sugano J."/>
            <person name="Satoh T."/>
            <person name="Shirai Y."/>
            <person name="Takahashi Y."/>
            <person name="Nakagawa K."/>
            <person name="Okumura K."/>
            <person name="Nagase T."/>
            <person name="Nomura N."/>
            <person name="Kikuchi H."/>
            <person name="Masuho Y."/>
            <person name="Yamashita R."/>
            <person name="Nakai K."/>
            <person name="Yada T."/>
            <person name="Nakamura Y."/>
            <person name="Ohara O."/>
            <person name="Isogai T."/>
            <person name="Sugano S."/>
        </authorList>
    </citation>
    <scope>NUCLEOTIDE SEQUENCE [LARGE SCALE MRNA] (ISOFORM 2)</scope>
</reference>
<reference key="4">
    <citation type="journal article" date="2006" name="Nature">
        <title>The DNA sequence and biological annotation of human chromosome 1.</title>
        <authorList>
            <person name="Gregory S.G."/>
            <person name="Barlow K.F."/>
            <person name="McLay K.E."/>
            <person name="Kaul R."/>
            <person name="Swarbreck D."/>
            <person name="Dunham A."/>
            <person name="Scott C.E."/>
            <person name="Howe K.L."/>
            <person name="Woodfine K."/>
            <person name="Spencer C.C.A."/>
            <person name="Jones M.C."/>
            <person name="Gillson C."/>
            <person name="Searle S."/>
            <person name="Zhou Y."/>
            <person name="Kokocinski F."/>
            <person name="McDonald L."/>
            <person name="Evans R."/>
            <person name="Phillips K."/>
            <person name="Atkinson A."/>
            <person name="Cooper R."/>
            <person name="Jones C."/>
            <person name="Hall R.E."/>
            <person name="Andrews T.D."/>
            <person name="Lloyd C."/>
            <person name="Ainscough R."/>
            <person name="Almeida J.P."/>
            <person name="Ambrose K.D."/>
            <person name="Anderson F."/>
            <person name="Andrew R.W."/>
            <person name="Ashwell R.I.S."/>
            <person name="Aubin K."/>
            <person name="Babbage A.K."/>
            <person name="Bagguley C.L."/>
            <person name="Bailey J."/>
            <person name="Beasley H."/>
            <person name="Bethel G."/>
            <person name="Bird C.P."/>
            <person name="Bray-Allen S."/>
            <person name="Brown J.Y."/>
            <person name="Brown A.J."/>
            <person name="Buckley D."/>
            <person name="Burton J."/>
            <person name="Bye J."/>
            <person name="Carder C."/>
            <person name="Chapman J.C."/>
            <person name="Clark S.Y."/>
            <person name="Clarke G."/>
            <person name="Clee C."/>
            <person name="Cobley V."/>
            <person name="Collier R.E."/>
            <person name="Corby N."/>
            <person name="Coville G.J."/>
            <person name="Davies J."/>
            <person name="Deadman R."/>
            <person name="Dunn M."/>
            <person name="Earthrowl M."/>
            <person name="Ellington A.G."/>
            <person name="Errington H."/>
            <person name="Frankish A."/>
            <person name="Frankland J."/>
            <person name="French L."/>
            <person name="Garner P."/>
            <person name="Garnett J."/>
            <person name="Gay L."/>
            <person name="Ghori M.R.J."/>
            <person name="Gibson R."/>
            <person name="Gilby L.M."/>
            <person name="Gillett W."/>
            <person name="Glithero R.J."/>
            <person name="Grafham D.V."/>
            <person name="Griffiths C."/>
            <person name="Griffiths-Jones S."/>
            <person name="Grocock R."/>
            <person name="Hammond S."/>
            <person name="Harrison E.S.I."/>
            <person name="Hart E."/>
            <person name="Haugen E."/>
            <person name="Heath P.D."/>
            <person name="Holmes S."/>
            <person name="Holt K."/>
            <person name="Howden P.J."/>
            <person name="Hunt A.R."/>
            <person name="Hunt S.E."/>
            <person name="Hunter G."/>
            <person name="Isherwood J."/>
            <person name="James R."/>
            <person name="Johnson C."/>
            <person name="Johnson D."/>
            <person name="Joy A."/>
            <person name="Kay M."/>
            <person name="Kershaw J.K."/>
            <person name="Kibukawa M."/>
            <person name="Kimberley A.M."/>
            <person name="King A."/>
            <person name="Knights A.J."/>
            <person name="Lad H."/>
            <person name="Laird G."/>
            <person name="Lawlor S."/>
            <person name="Leongamornlert D.A."/>
            <person name="Lloyd D.M."/>
            <person name="Loveland J."/>
            <person name="Lovell J."/>
            <person name="Lush M.J."/>
            <person name="Lyne R."/>
            <person name="Martin S."/>
            <person name="Mashreghi-Mohammadi M."/>
            <person name="Matthews L."/>
            <person name="Matthews N.S.W."/>
            <person name="McLaren S."/>
            <person name="Milne S."/>
            <person name="Mistry S."/>
            <person name="Moore M.J.F."/>
            <person name="Nickerson T."/>
            <person name="O'Dell C.N."/>
            <person name="Oliver K."/>
            <person name="Palmeiri A."/>
            <person name="Palmer S.A."/>
            <person name="Parker A."/>
            <person name="Patel D."/>
            <person name="Pearce A.V."/>
            <person name="Peck A.I."/>
            <person name="Pelan S."/>
            <person name="Phelps K."/>
            <person name="Phillimore B.J."/>
            <person name="Plumb R."/>
            <person name="Rajan J."/>
            <person name="Raymond C."/>
            <person name="Rouse G."/>
            <person name="Saenphimmachak C."/>
            <person name="Sehra H.K."/>
            <person name="Sheridan E."/>
            <person name="Shownkeen R."/>
            <person name="Sims S."/>
            <person name="Skuce C.D."/>
            <person name="Smith M."/>
            <person name="Steward C."/>
            <person name="Subramanian S."/>
            <person name="Sycamore N."/>
            <person name="Tracey A."/>
            <person name="Tromans A."/>
            <person name="Van Helmond Z."/>
            <person name="Wall M."/>
            <person name="Wallis J.M."/>
            <person name="White S."/>
            <person name="Whitehead S.L."/>
            <person name="Wilkinson J.E."/>
            <person name="Willey D.L."/>
            <person name="Williams H."/>
            <person name="Wilming L."/>
            <person name="Wray P.W."/>
            <person name="Wu Z."/>
            <person name="Coulson A."/>
            <person name="Vaudin M."/>
            <person name="Sulston J.E."/>
            <person name="Durbin R.M."/>
            <person name="Hubbard T."/>
            <person name="Wooster R."/>
            <person name="Dunham I."/>
            <person name="Carter N.P."/>
            <person name="McVean G."/>
            <person name="Ross M.T."/>
            <person name="Harrow J."/>
            <person name="Olson M.V."/>
            <person name="Beck S."/>
            <person name="Rogers J."/>
            <person name="Bentley D.R."/>
        </authorList>
    </citation>
    <scope>NUCLEOTIDE SEQUENCE [LARGE SCALE GENOMIC DNA]</scope>
</reference>
<reference key="5">
    <citation type="submission" date="2005-09" db="EMBL/GenBank/DDBJ databases">
        <authorList>
            <person name="Mural R.J."/>
            <person name="Istrail S."/>
            <person name="Sutton G.G."/>
            <person name="Florea L."/>
            <person name="Halpern A.L."/>
            <person name="Mobarry C.M."/>
            <person name="Lippert R."/>
            <person name="Walenz B."/>
            <person name="Shatkay H."/>
            <person name="Dew I."/>
            <person name="Miller J.R."/>
            <person name="Flanigan M.J."/>
            <person name="Edwards N.J."/>
            <person name="Bolanos R."/>
            <person name="Fasulo D."/>
            <person name="Halldorsson B.V."/>
            <person name="Hannenhalli S."/>
            <person name="Turner R."/>
            <person name="Yooseph S."/>
            <person name="Lu F."/>
            <person name="Nusskern D.R."/>
            <person name="Shue B.C."/>
            <person name="Zheng X.H."/>
            <person name="Zhong F."/>
            <person name="Delcher A.L."/>
            <person name="Huson D.H."/>
            <person name="Kravitz S.A."/>
            <person name="Mouchard L."/>
            <person name="Reinert K."/>
            <person name="Remington K.A."/>
            <person name="Clark A.G."/>
            <person name="Waterman M.S."/>
            <person name="Eichler E.E."/>
            <person name="Adams M.D."/>
            <person name="Hunkapiller M.W."/>
            <person name="Myers E.W."/>
            <person name="Venter J.C."/>
        </authorList>
    </citation>
    <scope>NUCLEOTIDE SEQUENCE [LARGE SCALE GENOMIC DNA]</scope>
</reference>
<reference key="6">
    <citation type="journal article" date="2004" name="Genome Res.">
        <title>The status, quality, and expansion of the NIH full-length cDNA project: the Mammalian Gene Collection (MGC).</title>
        <authorList>
            <consortium name="The MGC Project Team"/>
        </authorList>
    </citation>
    <scope>NUCLEOTIDE SEQUENCE [LARGE SCALE MRNA] (ISOFORM 1)</scope>
    <source>
        <tissue>Brain</tissue>
        <tissue>Duodenum</tissue>
    </source>
</reference>
<sequence length="238" mass="26350">MAAAPLLLLLLLVPVPLLPLLAQGPGGALGNRHAVYWNSSNQHLRREGYTVQVNVNDYLDIYCPHYNSSGVGPGAGPGPGGGAEQYVLYMVSRNGYRTCNASQGFKRWECNRPHAPHSPIKFSEKFQRYSAFSLGYEFHAGHEYYYISTPTHNLHWKCLRMKVFVCCASTSHSGEKPVPTLPQFTMGPNVKINVLEDFEGENPQVPKLEKSISGTSPKREHLPLAVGIAFFLMTFLAS</sequence>
<gene>
    <name type="primary">EFNA3</name>
    <name type="synonym">EFL2</name>
    <name type="synonym">EPLG3</name>
    <name type="synonym">LERK3</name>
</gene>
<organism>
    <name type="scientific">Homo sapiens</name>
    <name type="common">Human</name>
    <dbReference type="NCBI Taxonomy" id="9606"/>
    <lineage>
        <taxon>Eukaryota</taxon>
        <taxon>Metazoa</taxon>
        <taxon>Chordata</taxon>
        <taxon>Craniata</taxon>
        <taxon>Vertebrata</taxon>
        <taxon>Euteleostomi</taxon>
        <taxon>Mammalia</taxon>
        <taxon>Eutheria</taxon>
        <taxon>Euarchontoglires</taxon>
        <taxon>Primates</taxon>
        <taxon>Haplorrhini</taxon>
        <taxon>Catarrhini</taxon>
        <taxon>Hominidae</taxon>
        <taxon>Homo</taxon>
    </lineage>
</organism>
<protein>
    <recommendedName>
        <fullName>Ephrin-A3</fullName>
    </recommendedName>
    <alternativeName>
        <fullName>EFL-2</fullName>
    </alternativeName>
    <alternativeName>
        <fullName>EHK1 ligand</fullName>
        <shortName>EHK1-L</shortName>
    </alternativeName>
    <alternativeName>
        <fullName>EPH-related receptor tyrosine kinase ligand 3</fullName>
        <shortName>LERK-3</shortName>
    </alternativeName>
</protein>
<keyword id="KW-0025">Alternative splicing</keyword>
<keyword id="KW-1003">Cell membrane</keyword>
<keyword id="KW-1015">Disulfide bond</keyword>
<keyword id="KW-0325">Glycoprotein</keyword>
<keyword id="KW-0336">GPI-anchor</keyword>
<keyword id="KW-0449">Lipoprotein</keyword>
<keyword id="KW-0472">Membrane</keyword>
<keyword id="KW-1267">Proteomics identification</keyword>
<keyword id="KW-1185">Reference proteome</keyword>
<keyword id="KW-0732">Signal</keyword>
<accession>P52797</accession>
<accession>B7ZAD3</accession>
<accession>D3DV85</accession>
<accession>Q0VGC9</accession>
<accession>Q5SR70</accession>
<dbReference type="EMBL" id="U14187">
    <property type="protein sequence ID" value="AAC50078.1"/>
    <property type="molecule type" value="mRNA"/>
</dbReference>
<dbReference type="EMBL" id="L37360">
    <property type="protein sequence ID" value="AAA52368.1"/>
    <property type="molecule type" value="mRNA"/>
</dbReference>
<dbReference type="EMBL" id="AK316248">
    <property type="protein sequence ID" value="BAH14619.1"/>
    <property type="molecule type" value="mRNA"/>
</dbReference>
<dbReference type="EMBL" id="AL691442">
    <property type="status" value="NOT_ANNOTATED_CDS"/>
    <property type="molecule type" value="Genomic_DNA"/>
</dbReference>
<dbReference type="EMBL" id="CH471121">
    <property type="protein sequence ID" value="EAW53137.1"/>
    <property type="molecule type" value="Genomic_DNA"/>
</dbReference>
<dbReference type="EMBL" id="BC017722">
    <property type="protein sequence ID" value="AAH17722.1"/>
    <property type="molecule type" value="mRNA"/>
</dbReference>
<dbReference type="EMBL" id="BC110406">
    <property type="protein sequence ID" value="AAI10407.1"/>
    <property type="molecule type" value="mRNA"/>
</dbReference>
<dbReference type="CCDS" id="CCDS1090.1">
    <molecule id="P52797-1"/>
</dbReference>
<dbReference type="PIR" id="I38849">
    <property type="entry name" value="I38849"/>
</dbReference>
<dbReference type="RefSeq" id="NP_004943.1">
    <molecule id="P52797-1"/>
    <property type="nucleotide sequence ID" value="NM_004952.5"/>
</dbReference>
<dbReference type="SMR" id="P52797"/>
<dbReference type="BioGRID" id="108264">
    <property type="interactions" value="106"/>
</dbReference>
<dbReference type="FunCoup" id="P52797">
    <property type="interactions" value="1274"/>
</dbReference>
<dbReference type="IntAct" id="P52797">
    <property type="interactions" value="5"/>
</dbReference>
<dbReference type="STRING" id="9606.ENSP00000357393"/>
<dbReference type="GlyConnect" id="1210">
    <property type="glycosylation" value="14 N-Linked glycans (2 sites)"/>
</dbReference>
<dbReference type="GlyCosmos" id="P52797">
    <property type="glycosylation" value="3 sites, 13 glycans"/>
</dbReference>
<dbReference type="GlyGen" id="P52797">
    <property type="glycosylation" value="3 sites, 15 N-linked glycans (2 sites)"/>
</dbReference>
<dbReference type="iPTMnet" id="P52797"/>
<dbReference type="PhosphoSitePlus" id="P52797"/>
<dbReference type="BioMuta" id="EFNA3"/>
<dbReference type="jPOST" id="P52797"/>
<dbReference type="MassIVE" id="P52797"/>
<dbReference type="PaxDb" id="9606-ENSP00000357393"/>
<dbReference type="PeptideAtlas" id="P52797"/>
<dbReference type="ProteomicsDB" id="56535">
    <molecule id="P52797-1"/>
</dbReference>
<dbReference type="ProteomicsDB" id="7061"/>
<dbReference type="Antibodypedia" id="4186">
    <property type="antibodies" value="349 antibodies from 31 providers"/>
</dbReference>
<dbReference type="DNASU" id="1944"/>
<dbReference type="Ensembl" id="ENST00000368408.4">
    <molecule id="P52797-1"/>
    <property type="protein sequence ID" value="ENSP00000357393.3"/>
    <property type="gene ID" value="ENSG00000143590.14"/>
</dbReference>
<dbReference type="GeneID" id="1944"/>
<dbReference type="KEGG" id="hsa:1944"/>
<dbReference type="MANE-Select" id="ENST00000368408.4">
    <property type="protein sequence ID" value="ENSP00000357393.3"/>
    <property type="RefSeq nucleotide sequence ID" value="NM_004952.5"/>
    <property type="RefSeq protein sequence ID" value="NP_004943.1"/>
</dbReference>
<dbReference type="UCSC" id="uc001fhf.3">
    <molecule id="P52797-1"/>
    <property type="organism name" value="human"/>
</dbReference>
<dbReference type="AGR" id="HGNC:3223"/>
<dbReference type="CTD" id="1944"/>
<dbReference type="DisGeNET" id="1944"/>
<dbReference type="GeneCards" id="EFNA3"/>
<dbReference type="HGNC" id="HGNC:3223">
    <property type="gene designation" value="EFNA3"/>
</dbReference>
<dbReference type="HPA" id="ENSG00000143590">
    <property type="expression patterns" value="Tissue enhanced (esophagus, skin)"/>
</dbReference>
<dbReference type="MIM" id="601381">
    <property type="type" value="gene"/>
</dbReference>
<dbReference type="neXtProt" id="NX_P52797"/>
<dbReference type="OpenTargets" id="ENSG00000143590"/>
<dbReference type="PharmGKB" id="PA27658"/>
<dbReference type="VEuPathDB" id="HostDB:ENSG00000143590"/>
<dbReference type="eggNOG" id="KOG3858">
    <property type="taxonomic scope" value="Eukaryota"/>
</dbReference>
<dbReference type="GeneTree" id="ENSGT00940000161355"/>
<dbReference type="HOGENOM" id="CLU_081598_1_0_1"/>
<dbReference type="InParanoid" id="P52797"/>
<dbReference type="OMA" id="LCNFPLC"/>
<dbReference type="OrthoDB" id="9940835at2759"/>
<dbReference type="PAN-GO" id="P52797">
    <property type="GO annotations" value="4 GO annotations based on evolutionary models"/>
</dbReference>
<dbReference type="PhylomeDB" id="P52797"/>
<dbReference type="PathwayCommons" id="P52797"/>
<dbReference type="Reactome" id="R-HSA-2682334">
    <property type="pathway name" value="EPH-Ephrin signaling"/>
</dbReference>
<dbReference type="Reactome" id="R-HSA-3928663">
    <property type="pathway name" value="EPHA-mediated growth cone collapse"/>
</dbReference>
<dbReference type="Reactome" id="R-HSA-3928665">
    <property type="pathway name" value="EPH-ephrin mediated repulsion of cells"/>
</dbReference>
<dbReference type="SignaLink" id="P52797"/>
<dbReference type="SIGNOR" id="P52797"/>
<dbReference type="BioGRID-ORCS" id="1944">
    <property type="hits" value="74 hits in 1146 CRISPR screens"/>
</dbReference>
<dbReference type="GeneWiki" id="EFNA3"/>
<dbReference type="GenomeRNAi" id="1944"/>
<dbReference type="Pharos" id="P52797">
    <property type="development level" value="Tbio"/>
</dbReference>
<dbReference type="PRO" id="PR:P52797"/>
<dbReference type="Proteomes" id="UP000005640">
    <property type="component" value="Chromosome 1"/>
</dbReference>
<dbReference type="RNAct" id="P52797">
    <property type="molecule type" value="protein"/>
</dbReference>
<dbReference type="Bgee" id="ENSG00000143590">
    <property type="expression patterns" value="Expressed in skin of leg and 163 other cell types or tissues"/>
</dbReference>
<dbReference type="GO" id="GO:0005886">
    <property type="term" value="C:plasma membrane"/>
    <property type="evidence" value="ECO:0000318"/>
    <property type="project" value="GO_Central"/>
</dbReference>
<dbReference type="GO" id="GO:0098552">
    <property type="term" value="C:side of membrane"/>
    <property type="evidence" value="ECO:0007669"/>
    <property type="project" value="UniProtKB-KW"/>
</dbReference>
<dbReference type="GO" id="GO:0046875">
    <property type="term" value="F:ephrin receptor binding"/>
    <property type="evidence" value="ECO:0000353"/>
    <property type="project" value="UniProtKB"/>
</dbReference>
<dbReference type="GO" id="GO:0005005">
    <property type="term" value="F:transmembrane-ephrin receptor activity"/>
    <property type="evidence" value="ECO:0000304"/>
    <property type="project" value="ProtInc"/>
</dbReference>
<dbReference type="GO" id="GO:0007411">
    <property type="term" value="P:axon guidance"/>
    <property type="evidence" value="ECO:0000318"/>
    <property type="project" value="GO_Central"/>
</dbReference>
<dbReference type="GO" id="GO:0007267">
    <property type="term" value="P:cell-cell signaling"/>
    <property type="evidence" value="ECO:0000304"/>
    <property type="project" value="ProtInc"/>
</dbReference>
<dbReference type="GO" id="GO:0048013">
    <property type="term" value="P:ephrin receptor signaling pathway"/>
    <property type="evidence" value="ECO:0000316"/>
    <property type="project" value="ARUK-UCL"/>
</dbReference>
<dbReference type="GO" id="GO:0016525">
    <property type="term" value="P:negative regulation of angiogenesis"/>
    <property type="evidence" value="ECO:0000314"/>
    <property type="project" value="BHF-UCL"/>
</dbReference>
<dbReference type="GO" id="GO:1902993">
    <property type="term" value="P:positive regulation of amyloid precursor protein catabolic process"/>
    <property type="evidence" value="ECO:0000316"/>
    <property type="project" value="ARUK-UCL"/>
</dbReference>
<dbReference type="CDD" id="cd10425">
    <property type="entry name" value="Ephrin-A_Ectodomain"/>
    <property type="match status" value="1"/>
</dbReference>
<dbReference type="FunFam" id="2.60.40.420:FF:000030">
    <property type="entry name" value="ephrin-A3 isoform X1"/>
    <property type="match status" value="1"/>
</dbReference>
<dbReference type="Gene3D" id="2.60.40.420">
    <property type="entry name" value="Cupredoxins - blue copper proteins"/>
    <property type="match status" value="1"/>
</dbReference>
<dbReference type="InterPro" id="IPR008972">
    <property type="entry name" value="Cupredoxin"/>
</dbReference>
<dbReference type="InterPro" id="IPR031328">
    <property type="entry name" value="Ephrin"/>
</dbReference>
<dbReference type="InterPro" id="IPR034252">
    <property type="entry name" value="Ephrin-A_Ecto"/>
</dbReference>
<dbReference type="InterPro" id="IPR019765">
    <property type="entry name" value="Ephrin_CS"/>
</dbReference>
<dbReference type="InterPro" id="IPR001799">
    <property type="entry name" value="Ephrin_RBD"/>
</dbReference>
<dbReference type="PANTHER" id="PTHR11304">
    <property type="entry name" value="EPHRIN"/>
    <property type="match status" value="1"/>
</dbReference>
<dbReference type="PANTHER" id="PTHR11304:SF5">
    <property type="entry name" value="EPHRIN-A3"/>
    <property type="match status" value="1"/>
</dbReference>
<dbReference type="Pfam" id="PF00812">
    <property type="entry name" value="Ephrin"/>
    <property type="match status" value="1"/>
</dbReference>
<dbReference type="PRINTS" id="PR01347">
    <property type="entry name" value="EPHRIN"/>
</dbReference>
<dbReference type="SUPFAM" id="SSF49503">
    <property type="entry name" value="Cupredoxins"/>
    <property type="match status" value="1"/>
</dbReference>
<dbReference type="PROSITE" id="PS01299">
    <property type="entry name" value="EPHRIN_RBD_1"/>
    <property type="match status" value="1"/>
</dbReference>
<dbReference type="PROSITE" id="PS51551">
    <property type="entry name" value="EPHRIN_RBD_2"/>
    <property type="match status" value="1"/>
</dbReference>
<proteinExistence type="evidence at protein level"/>
<comment type="function">
    <text evidence="1">Cell surface GPI-bound ligand for Eph receptors, a family of receptor tyrosine kinases which are crucial for migration, repulsion and adhesion during neuronal, vascular and epithelial development. Binds promiscuously Eph receptors residing on adjacent cells, leading to contact-dependent bidirectional signaling into neighboring cells. The signaling pathway downstream of the receptor is referred to as forward signaling while the signaling pathway downstream of the ephrin ligand is referred to as reverse signaling (By similarity).</text>
</comment>
<comment type="subunit">
    <text>Interacts with EPHA8; activates EPHA8.</text>
</comment>
<comment type="interaction">
    <interactant intactId="EBI-722730">
        <id>P52797</id>
    </interactant>
    <interactant intactId="EBI-11959885">
        <id>Q07627</id>
        <label>KRTAP1-1</label>
    </interactant>
    <organismsDiffer>false</organismsDiffer>
    <experiments>3</experiments>
</comment>
<comment type="interaction">
    <interactant intactId="EBI-722730">
        <id>P52797</id>
    </interactant>
    <interactant intactId="EBI-11973993">
        <id>Q5TA81</id>
        <label>LCE2C</label>
    </interactant>
    <organismsDiffer>false</organismsDiffer>
    <experiments>3</experiments>
</comment>
<comment type="interaction">
    <interactant intactId="EBI-722730">
        <id>P52797</id>
    </interactant>
    <interactant intactId="EBI-748397">
        <id>P50222</id>
        <label>MEOX2</label>
    </interactant>
    <organismsDiffer>false</organismsDiffer>
    <experiments>3</experiments>
</comment>
<comment type="interaction">
    <interactant intactId="EBI-722730">
        <id>P52797</id>
    </interactant>
    <interactant intactId="EBI-945833">
        <id>Q7Z3S9</id>
        <label>NOTCH2NLA</label>
    </interactant>
    <organismsDiffer>false</organismsDiffer>
    <experiments>3</experiments>
</comment>
<comment type="subcellular location">
    <subcellularLocation>
        <location>Cell membrane</location>
        <topology>Lipid-anchor</topology>
        <topology>GPI-anchor</topology>
    </subcellularLocation>
</comment>
<comment type="alternative products">
    <event type="alternative splicing"/>
    <isoform>
        <id>P52797-1</id>
        <name>1</name>
        <sequence type="displayed"/>
    </isoform>
    <isoform>
        <id>P52797-2</id>
        <name>2</name>
        <sequence type="described" ref="VSP_055483"/>
    </isoform>
</comment>
<comment type="tissue specificity">
    <text>Expressed in brain, skeletal muscle, spleen, thymus, prostate, testis, ovary, small intestine, and peripheral blood leukocytes.</text>
</comment>
<comment type="similarity">
    <text evidence="3">Belongs to the ephrin family.</text>
</comment>
<name>EFNA3_HUMAN</name>
<feature type="signal peptide" evidence="2">
    <location>
        <begin position="1"/>
        <end position="22"/>
    </location>
</feature>
<feature type="chain" id="PRO_0000008369" description="Ephrin-A3">
    <location>
        <begin position="23"/>
        <end position="214"/>
    </location>
</feature>
<feature type="propeptide" id="PRO_0000008370" description="Removed in mature form" evidence="2">
    <location>
        <begin position="215"/>
        <end position="238"/>
    </location>
</feature>
<feature type="domain" description="Ephrin RBD" evidence="3">
    <location>
        <begin position="30"/>
        <end position="169"/>
    </location>
</feature>
<feature type="lipid moiety-binding region" description="GPI-anchor amidated glycine" evidence="2">
    <location>
        <position position="214"/>
    </location>
</feature>
<feature type="glycosylation site" description="N-linked (GlcNAc...) asparagine" evidence="2">
    <location>
        <position position="38"/>
    </location>
</feature>
<feature type="glycosylation site" description="N-linked (GlcNAc...) asparagine" evidence="2">
    <location>
        <position position="67"/>
    </location>
</feature>
<feature type="glycosylation site" description="N-linked (GlcNAc...) asparagine" evidence="2">
    <location>
        <position position="100"/>
    </location>
</feature>
<feature type="disulfide bond" evidence="3">
    <location>
        <begin position="63"/>
        <end position="110"/>
    </location>
</feature>
<feature type="disulfide bond" evidence="3">
    <location>
        <begin position="99"/>
        <end position="158"/>
    </location>
</feature>
<feature type="splice variant" id="VSP_055483" description="In isoform 2." evidence="4">
    <original>TSHSGEKPVPTLPQFTMGPNVKINVLE</original>
    <variation>K</variation>
    <location>
        <begin position="170"/>
        <end position="196"/>
    </location>
</feature>
<feature type="sequence variant" id="VAR_048937" description="In dbSNP:rs17723260.">
    <original>V</original>
    <variation>M</variation>
    <location>
        <position position="190"/>
    </location>
</feature>
<feature type="sequence conflict" description="In Ref. 2; AAA52368." evidence="5" ref="2">
    <location>
        <begin position="71"/>
        <end position="74"/>
    </location>
</feature>
<evidence type="ECO:0000250" key="1"/>
<evidence type="ECO:0000255" key="2"/>
<evidence type="ECO:0000255" key="3">
    <source>
        <dbReference type="PROSITE-ProRule" id="PRU00884"/>
    </source>
</evidence>
<evidence type="ECO:0000303" key="4">
    <source>
    </source>
</evidence>
<evidence type="ECO:0000305" key="5"/>